<name>TRUB_STAAT</name>
<evidence type="ECO:0000255" key="1">
    <source>
        <dbReference type="HAMAP-Rule" id="MF_01080"/>
    </source>
</evidence>
<organism>
    <name type="scientific">Staphylococcus aureus (strain USA300 / TCH1516)</name>
    <dbReference type="NCBI Taxonomy" id="451516"/>
    <lineage>
        <taxon>Bacteria</taxon>
        <taxon>Bacillati</taxon>
        <taxon>Bacillota</taxon>
        <taxon>Bacilli</taxon>
        <taxon>Bacillales</taxon>
        <taxon>Staphylococcaceae</taxon>
        <taxon>Staphylococcus</taxon>
    </lineage>
</organism>
<protein>
    <recommendedName>
        <fullName evidence="1">tRNA pseudouridine synthase B</fullName>
        <ecNumber evidence="1">5.4.99.25</ecNumber>
    </recommendedName>
    <alternativeName>
        <fullName evidence="1">tRNA pseudouridine(55) synthase</fullName>
        <shortName evidence="1">Psi55 synthase</shortName>
    </alternativeName>
    <alternativeName>
        <fullName evidence="1">tRNA pseudouridylate synthase</fullName>
    </alternativeName>
    <alternativeName>
        <fullName evidence="1">tRNA-uridine isomerase</fullName>
    </alternativeName>
</protein>
<reference key="1">
    <citation type="journal article" date="2007" name="BMC Microbiol.">
        <title>Subtle genetic changes enhance virulence of methicillin resistant and sensitive Staphylococcus aureus.</title>
        <authorList>
            <person name="Highlander S.K."/>
            <person name="Hulten K.G."/>
            <person name="Qin X."/>
            <person name="Jiang H."/>
            <person name="Yerrapragada S."/>
            <person name="Mason E.O. Jr."/>
            <person name="Shang Y."/>
            <person name="Williams T.M."/>
            <person name="Fortunov R.M."/>
            <person name="Liu Y."/>
            <person name="Igboeli O."/>
            <person name="Petrosino J."/>
            <person name="Tirumalai M."/>
            <person name="Uzman A."/>
            <person name="Fox G.E."/>
            <person name="Cardenas A.M."/>
            <person name="Muzny D.M."/>
            <person name="Hemphill L."/>
            <person name="Ding Y."/>
            <person name="Dugan S."/>
            <person name="Blyth P.R."/>
            <person name="Buhay C.J."/>
            <person name="Dinh H.H."/>
            <person name="Hawes A.C."/>
            <person name="Holder M."/>
            <person name="Kovar C.L."/>
            <person name="Lee S.L."/>
            <person name="Liu W."/>
            <person name="Nazareth L.V."/>
            <person name="Wang Q."/>
            <person name="Zhou J."/>
            <person name="Kaplan S.L."/>
            <person name="Weinstock G.M."/>
        </authorList>
    </citation>
    <scope>NUCLEOTIDE SEQUENCE [LARGE SCALE GENOMIC DNA]</scope>
    <source>
        <strain>USA300 / TCH1516</strain>
    </source>
</reference>
<dbReference type="EC" id="5.4.99.25" evidence="1"/>
<dbReference type="EMBL" id="CP000730">
    <property type="protein sequence ID" value="ABX29217.1"/>
    <property type="molecule type" value="Genomic_DNA"/>
</dbReference>
<dbReference type="RefSeq" id="WP_000282305.1">
    <property type="nucleotide sequence ID" value="NC_010079.1"/>
</dbReference>
<dbReference type="SMR" id="A8Z3V1"/>
<dbReference type="KEGG" id="sax:USA300HOU_1203"/>
<dbReference type="HOGENOM" id="CLU_032087_0_1_9"/>
<dbReference type="GO" id="GO:0003723">
    <property type="term" value="F:RNA binding"/>
    <property type="evidence" value="ECO:0007669"/>
    <property type="project" value="InterPro"/>
</dbReference>
<dbReference type="GO" id="GO:0160148">
    <property type="term" value="F:tRNA pseudouridine(55) synthase activity"/>
    <property type="evidence" value="ECO:0007669"/>
    <property type="project" value="UniProtKB-EC"/>
</dbReference>
<dbReference type="GO" id="GO:1990481">
    <property type="term" value="P:mRNA pseudouridine synthesis"/>
    <property type="evidence" value="ECO:0007669"/>
    <property type="project" value="TreeGrafter"/>
</dbReference>
<dbReference type="GO" id="GO:0031119">
    <property type="term" value="P:tRNA pseudouridine synthesis"/>
    <property type="evidence" value="ECO:0007669"/>
    <property type="project" value="UniProtKB-UniRule"/>
</dbReference>
<dbReference type="CDD" id="cd02573">
    <property type="entry name" value="PseudoU_synth_EcTruB"/>
    <property type="match status" value="1"/>
</dbReference>
<dbReference type="FunFam" id="3.30.2350.10:FF:000011">
    <property type="entry name" value="tRNA pseudouridine synthase B"/>
    <property type="match status" value="1"/>
</dbReference>
<dbReference type="Gene3D" id="3.30.2350.10">
    <property type="entry name" value="Pseudouridine synthase"/>
    <property type="match status" value="1"/>
</dbReference>
<dbReference type="HAMAP" id="MF_01080">
    <property type="entry name" value="TruB_bact"/>
    <property type="match status" value="1"/>
</dbReference>
<dbReference type="InterPro" id="IPR020103">
    <property type="entry name" value="PsdUridine_synth_cat_dom_sf"/>
</dbReference>
<dbReference type="InterPro" id="IPR002501">
    <property type="entry name" value="PsdUridine_synth_N"/>
</dbReference>
<dbReference type="InterPro" id="IPR014780">
    <property type="entry name" value="tRNA_psdUridine_synth_TruB"/>
</dbReference>
<dbReference type="InterPro" id="IPR032819">
    <property type="entry name" value="TruB_C"/>
</dbReference>
<dbReference type="NCBIfam" id="TIGR00431">
    <property type="entry name" value="TruB"/>
    <property type="match status" value="1"/>
</dbReference>
<dbReference type="PANTHER" id="PTHR13767:SF2">
    <property type="entry name" value="PSEUDOURIDYLATE SYNTHASE TRUB1"/>
    <property type="match status" value="1"/>
</dbReference>
<dbReference type="PANTHER" id="PTHR13767">
    <property type="entry name" value="TRNA-PSEUDOURIDINE SYNTHASE"/>
    <property type="match status" value="1"/>
</dbReference>
<dbReference type="Pfam" id="PF16198">
    <property type="entry name" value="TruB_C_2"/>
    <property type="match status" value="1"/>
</dbReference>
<dbReference type="Pfam" id="PF01509">
    <property type="entry name" value="TruB_N"/>
    <property type="match status" value="1"/>
</dbReference>
<dbReference type="SUPFAM" id="SSF55120">
    <property type="entry name" value="Pseudouridine synthase"/>
    <property type="match status" value="1"/>
</dbReference>
<comment type="function">
    <text evidence="1">Responsible for synthesis of pseudouridine from uracil-55 in the psi GC loop of transfer RNAs.</text>
</comment>
<comment type="catalytic activity">
    <reaction evidence="1">
        <text>uridine(55) in tRNA = pseudouridine(55) in tRNA</text>
        <dbReference type="Rhea" id="RHEA:42532"/>
        <dbReference type="Rhea" id="RHEA-COMP:10101"/>
        <dbReference type="Rhea" id="RHEA-COMP:10102"/>
        <dbReference type="ChEBI" id="CHEBI:65314"/>
        <dbReference type="ChEBI" id="CHEBI:65315"/>
        <dbReference type="EC" id="5.4.99.25"/>
    </reaction>
</comment>
<comment type="similarity">
    <text evidence="1">Belongs to the pseudouridine synthase TruB family. Type 1 subfamily.</text>
</comment>
<sequence>MYNGILPVYKERGLTSHDVVFKLRKILKTKKIGHTGTLDPEVAGVLPVCIGNATRVSDYVMDMGKAYEATVSIGRSTTTEDQTGDTLETKGVHSADFNKDDIDRLLESFKGIIEQIPPMYSSVKVNGKKLYEYARNNETVERPKRKVNIKDIGRISELDFKENECHFKIRVICGKGTYIRTLATDIGVKLGFPAHMSKLTRIESGGFVLKDSLTLEQIKELHEQDSLQNKLFPLEYGLKGLPSIKIKDSHIKKRILNGQKFNKNEFDNKIKDQIVFIDDDSEKVLAIYMVHPTKESEIKPKKVFN</sequence>
<keyword id="KW-0413">Isomerase</keyword>
<keyword id="KW-0819">tRNA processing</keyword>
<accession>A8Z3V1</accession>
<gene>
    <name evidence="1" type="primary">truB</name>
    <name type="ordered locus">USA300HOU_1203</name>
</gene>
<proteinExistence type="inferred from homology"/>
<feature type="chain" id="PRO_1000084694" description="tRNA pseudouridine synthase B">
    <location>
        <begin position="1"/>
        <end position="305"/>
    </location>
</feature>
<feature type="active site" description="Nucleophile" evidence="1">
    <location>
        <position position="39"/>
    </location>
</feature>